<proteinExistence type="inferred from homology"/>
<dbReference type="EC" id="6.2.1.3" evidence="1"/>
<dbReference type="EMBL" id="AE000516">
    <property type="protein sequence ID" value="AAK47510.1"/>
    <property type="molecule type" value="Genomic_DNA"/>
</dbReference>
<dbReference type="PIR" id="E70853">
    <property type="entry name" value="E70853"/>
</dbReference>
<dbReference type="RefSeq" id="WP_003416081.1">
    <property type="nucleotide sequence ID" value="NZ_KK341227.1"/>
</dbReference>
<dbReference type="SMR" id="P9WQ36"/>
<dbReference type="KEGG" id="mtc:MT3174"/>
<dbReference type="PATRIC" id="fig|83331.31.peg.3420"/>
<dbReference type="HOGENOM" id="CLU_000022_59_0_11"/>
<dbReference type="UniPathway" id="UPA00094"/>
<dbReference type="Proteomes" id="UP000001020">
    <property type="component" value="Chromosome"/>
</dbReference>
<dbReference type="GO" id="GO:0005886">
    <property type="term" value="C:plasma membrane"/>
    <property type="evidence" value="ECO:0007669"/>
    <property type="project" value="UniProtKB-SubCell"/>
</dbReference>
<dbReference type="GO" id="GO:0005524">
    <property type="term" value="F:ATP binding"/>
    <property type="evidence" value="ECO:0007669"/>
    <property type="project" value="UniProtKB-KW"/>
</dbReference>
<dbReference type="GO" id="GO:0004467">
    <property type="term" value="F:long-chain fatty acid-CoA ligase activity"/>
    <property type="evidence" value="ECO:0007669"/>
    <property type="project" value="UniProtKB-EC"/>
</dbReference>
<dbReference type="GO" id="GO:0031956">
    <property type="term" value="F:medium-chain fatty acid-CoA ligase activity"/>
    <property type="evidence" value="ECO:0007669"/>
    <property type="project" value="TreeGrafter"/>
</dbReference>
<dbReference type="GO" id="GO:0006633">
    <property type="term" value="P:fatty acid biosynthetic process"/>
    <property type="evidence" value="ECO:0007669"/>
    <property type="project" value="UniProtKB-UniPathway"/>
</dbReference>
<dbReference type="CDD" id="cd17631">
    <property type="entry name" value="FACL_FadD13-like"/>
    <property type="match status" value="1"/>
</dbReference>
<dbReference type="FunFam" id="3.30.300.30:FF:000008">
    <property type="entry name" value="2,3-dihydroxybenzoate-AMP ligase"/>
    <property type="match status" value="1"/>
</dbReference>
<dbReference type="Gene3D" id="3.30.300.30">
    <property type="match status" value="1"/>
</dbReference>
<dbReference type="Gene3D" id="3.40.50.12780">
    <property type="entry name" value="N-terminal domain of ligase-like"/>
    <property type="match status" value="1"/>
</dbReference>
<dbReference type="InterPro" id="IPR025110">
    <property type="entry name" value="AMP-bd_C"/>
</dbReference>
<dbReference type="InterPro" id="IPR045851">
    <property type="entry name" value="AMP-bd_C_sf"/>
</dbReference>
<dbReference type="InterPro" id="IPR020845">
    <property type="entry name" value="AMP-binding_CS"/>
</dbReference>
<dbReference type="InterPro" id="IPR000873">
    <property type="entry name" value="AMP-dep_synth/lig_dom"/>
</dbReference>
<dbReference type="InterPro" id="IPR042099">
    <property type="entry name" value="ANL_N_sf"/>
</dbReference>
<dbReference type="NCBIfam" id="NF004837">
    <property type="entry name" value="PRK06187.1"/>
    <property type="match status" value="1"/>
</dbReference>
<dbReference type="PANTHER" id="PTHR43201">
    <property type="entry name" value="ACYL-COA SYNTHETASE"/>
    <property type="match status" value="1"/>
</dbReference>
<dbReference type="PANTHER" id="PTHR43201:SF5">
    <property type="entry name" value="MEDIUM-CHAIN ACYL-COA LIGASE ACSF2, MITOCHONDRIAL"/>
    <property type="match status" value="1"/>
</dbReference>
<dbReference type="Pfam" id="PF00501">
    <property type="entry name" value="AMP-binding"/>
    <property type="match status" value="1"/>
</dbReference>
<dbReference type="Pfam" id="PF13193">
    <property type="entry name" value="AMP-binding_C"/>
    <property type="match status" value="1"/>
</dbReference>
<dbReference type="SUPFAM" id="SSF56801">
    <property type="entry name" value="Acetyl-CoA synthetase-like"/>
    <property type="match status" value="1"/>
</dbReference>
<dbReference type="PROSITE" id="PS00455">
    <property type="entry name" value="AMP_BINDING"/>
    <property type="match status" value="1"/>
</dbReference>
<protein>
    <recommendedName>
        <fullName>Long-chain-fatty-acid--CoA ligase FadD13</fullName>
        <ecNumber evidence="1">6.2.1.3</ecNumber>
    </recommendedName>
    <alternativeName>
        <fullName>Fatty acyl-CoA ligase</fullName>
        <shortName>FACL</shortName>
        <shortName>FACL13</shortName>
    </alternativeName>
    <alternativeName>
        <fullName>Fatty acyl-CoA synthetase</fullName>
        <shortName>ACS</shortName>
        <shortName>FACS</shortName>
    </alternativeName>
    <alternativeName>
        <fullName>Very-long-chain fatty-acyl-CoA synthetase</fullName>
        <shortName>ACSVL</shortName>
    </alternativeName>
</protein>
<sequence>MKNIGWMLRQRATVSPRLQAYVEPSTDVRMTYAQMNALANRCADVLTALGIAKGDRVALLMPNSVEFCCLFYGAAKLGAVAVPINTRLAAPEVSFILSDSGSKVVIYGAPSAPVIDAIRAQADPPGTVTDWIGADSLAERLRSAAADEPAVECGGDDNLFIMYTSGTTGHPKGVVHTHESVHSAASSWASTIDVRYRDRLLLPLPMFHVAALTTVIFSAMRGVTLISMPQFDATKVWSLIVEERVCIGGAVPAILNFMRQVPEFAELDAPDFRYFITGGAPMPEALIKIYAAKNIEVVQGYALTESCGGGTLLLSEDALRKAGSAGRATMFTDVAVRGDDGVIREHGEGEVVIKSDILLKEYWNRPEATRDAFDNGWFRTGDIGEIDDEGYLYIKDRLKDMIISGGENVYPAEIESVIIGVPGVSEVAVIGLPDEKWGEIAAAIVVADQNEVSEQQIVEYCGTRLARYKLPKKVIFAEAIPRNPTGKILKTVLREQYSATVPK</sequence>
<feature type="chain" id="PRO_0000426844" description="Long-chain-fatty-acid--CoA ligase FadD13">
    <location>
        <begin position="1"/>
        <end position="503"/>
    </location>
</feature>
<feature type="site" description="Membrane interaction" evidence="1">
    <location>
        <position position="9"/>
    </location>
</feature>
<feature type="site" description="Membrane interaction" evidence="1">
    <location>
        <position position="17"/>
    </location>
</feature>
<feature type="site" description="Membrane interaction" evidence="1">
    <location>
        <position position="195"/>
    </location>
</feature>
<feature type="site" description="Membrane interaction" evidence="1">
    <location>
        <position position="197"/>
    </location>
</feature>
<feature type="site" description="Important for substrate selectivity" evidence="1">
    <location>
        <position position="214"/>
    </location>
</feature>
<feature type="site" description="Membrane interaction" evidence="1">
    <location>
        <position position="244"/>
    </location>
</feature>
<feature type="site" description="Important for substrate selectivity" evidence="1">
    <location>
        <position position="302"/>
    </location>
</feature>
<gene>
    <name type="primary">fadD13</name>
    <name type="ordered locus">MT3174</name>
</gene>
<accession>P9WQ36</accession>
<accession>F2GNX9</accession>
<accession>L0TEI7</accession>
<accession>O53306</accession>
<accession>Q7D654</accession>
<organism>
    <name type="scientific">Mycobacterium tuberculosis (strain CDC 1551 / Oshkosh)</name>
    <dbReference type="NCBI Taxonomy" id="83331"/>
    <lineage>
        <taxon>Bacteria</taxon>
        <taxon>Bacillati</taxon>
        <taxon>Actinomycetota</taxon>
        <taxon>Actinomycetes</taxon>
        <taxon>Mycobacteriales</taxon>
        <taxon>Mycobacteriaceae</taxon>
        <taxon>Mycobacterium</taxon>
        <taxon>Mycobacterium tuberculosis complex</taxon>
    </lineage>
</organism>
<comment type="function">
    <text evidence="1">Required for maintaining the appropriate mycolic acid composition and permeability of the envelope on its exposure to acidic pH. Catalyzes the activation of long-chain fatty acids as acyl-coenzyme A (acyl-CoA), which are then transferred to the multifunctional polyketide synthase (PKS) type III for further chain extension.</text>
</comment>
<comment type="catalytic activity">
    <reaction evidence="1">
        <text>a long-chain fatty acid + ATP + CoA = a long-chain fatty acyl-CoA + AMP + diphosphate</text>
        <dbReference type="Rhea" id="RHEA:15421"/>
        <dbReference type="ChEBI" id="CHEBI:30616"/>
        <dbReference type="ChEBI" id="CHEBI:33019"/>
        <dbReference type="ChEBI" id="CHEBI:57287"/>
        <dbReference type="ChEBI" id="CHEBI:57560"/>
        <dbReference type="ChEBI" id="CHEBI:83139"/>
        <dbReference type="ChEBI" id="CHEBI:456215"/>
        <dbReference type="EC" id="6.2.1.3"/>
    </reaction>
</comment>
<comment type="pathway">
    <text evidence="1">Lipid metabolism; fatty acid biosynthesis.</text>
</comment>
<comment type="subunit">
    <text evidence="1">Homodimer.</text>
</comment>
<comment type="subcellular location">
    <subcellularLocation>
        <location evidence="1">Cell membrane</location>
        <topology evidence="1">Peripheral membrane protein</topology>
    </subcellularLocation>
</comment>
<comment type="similarity">
    <text evidence="2">Belongs to the ATP-dependent AMP-binding enzyme family.</text>
</comment>
<evidence type="ECO:0000250" key="1">
    <source>
        <dbReference type="UniProtKB" id="P9WQ37"/>
    </source>
</evidence>
<evidence type="ECO:0000305" key="2"/>
<keyword id="KW-0067">ATP-binding</keyword>
<keyword id="KW-1003">Cell membrane</keyword>
<keyword id="KW-0276">Fatty acid metabolism</keyword>
<keyword id="KW-0436">Ligase</keyword>
<keyword id="KW-0443">Lipid metabolism</keyword>
<keyword id="KW-0472">Membrane</keyword>
<keyword id="KW-0547">Nucleotide-binding</keyword>
<keyword id="KW-1185">Reference proteome</keyword>
<name>FAC13_MYCTO</name>
<reference key="1">
    <citation type="journal article" date="2002" name="J. Bacteriol.">
        <title>Whole-genome comparison of Mycobacterium tuberculosis clinical and laboratory strains.</title>
        <authorList>
            <person name="Fleischmann R.D."/>
            <person name="Alland D."/>
            <person name="Eisen J.A."/>
            <person name="Carpenter L."/>
            <person name="White O."/>
            <person name="Peterson J.D."/>
            <person name="DeBoy R.T."/>
            <person name="Dodson R.J."/>
            <person name="Gwinn M.L."/>
            <person name="Haft D.H."/>
            <person name="Hickey E.K."/>
            <person name="Kolonay J.F."/>
            <person name="Nelson W.C."/>
            <person name="Umayam L.A."/>
            <person name="Ermolaeva M.D."/>
            <person name="Salzberg S.L."/>
            <person name="Delcher A."/>
            <person name="Utterback T.R."/>
            <person name="Weidman J.F."/>
            <person name="Khouri H.M."/>
            <person name="Gill J."/>
            <person name="Mikula A."/>
            <person name="Bishai W."/>
            <person name="Jacobs W.R. Jr."/>
            <person name="Venter J.C."/>
            <person name="Fraser C.M."/>
        </authorList>
    </citation>
    <scope>NUCLEOTIDE SEQUENCE [LARGE SCALE GENOMIC DNA]</scope>
    <source>
        <strain>CDC 1551 / Oshkosh</strain>
    </source>
</reference>